<reference key="1">
    <citation type="journal article" date="2006" name="J. Bacteriol.">
        <title>The Methanosarcina barkeri genome: comparative analysis with Methanosarcina acetivorans and Methanosarcina mazei reveals extensive rearrangement within methanosarcinal genomes.</title>
        <authorList>
            <person name="Maeder D.L."/>
            <person name="Anderson I."/>
            <person name="Brettin T.S."/>
            <person name="Bruce D.C."/>
            <person name="Gilna P."/>
            <person name="Han C.S."/>
            <person name="Lapidus A."/>
            <person name="Metcalf W.W."/>
            <person name="Saunders E."/>
            <person name="Tapia R."/>
            <person name="Sowers K.R."/>
        </authorList>
    </citation>
    <scope>NUCLEOTIDE SEQUENCE [LARGE SCALE GENOMIC DNA]</scope>
    <source>
        <strain>Fusaro / DSM 804</strain>
    </source>
</reference>
<dbReference type="EMBL" id="CP000099">
    <property type="protein sequence ID" value="AAZ69075.1"/>
    <property type="molecule type" value="Genomic_DNA"/>
</dbReference>
<dbReference type="SMR" id="Q46GB7"/>
<dbReference type="STRING" id="269797.Mbar_A0088"/>
<dbReference type="PaxDb" id="269797-Mbar_A0088"/>
<dbReference type="KEGG" id="mba:Mbar_A0088"/>
<dbReference type="eggNOG" id="arCOG00779">
    <property type="taxonomic scope" value="Archaea"/>
</dbReference>
<dbReference type="HOGENOM" id="CLU_109163_0_0_2"/>
<dbReference type="OrthoDB" id="9418at2157"/>
<dbReference type="GO" id="GO:0022625">
    <property type="term" value="C:cytosolic large ribosomal subunit"/>
    <property type="evidence" value="ECO:0007669"/>
    <property type="project" value="TreeGrafter"/>
</dbReference>
<dbReference type="GO" id="GO:0019843">
    <property type="term" value="F:rRNA binding"/>
    <property type="evidence" value="ECO:0007669"/>
    <property type="project" value="UniProtKB-UniRule"/>
</dbReference>
<dbReference type="GO" id="GO:0003735">
    <property type="term" value="F:structural constituent of ribosome"/>
    <property type="evidence" value="ECO:0007669"/>
    <property type="project" value="InterPro"/>
</dbReference>
<dbReference type="GO" id="GO:0006412">
    <property type="term" value="P:translation"/>
    <property type="evidence" value="ECO:0007669"/>
    <property type="project" value="UniProtKB-UniRule"/>
</dbReference>
<dbReference type="FunFam" id="3.100.10.10:FF:000021">
    <property type="entry name" value="50S ribosomal protein L15"/>
    <property type="match status" value="1"/>
</dbReference>
<dbReference type="FunFam" id="4.10.990.10:FF:000001">
    <property type="entry name" value="50S ribosomal protein L15"/>
    <property type="match status" value="1"/>
</dbReference>
<dbReference type="Gene3D" id="3.100.10.10">
    <property type="match status" value="1"/>
</dbReference>
<dbReference type="Gene3D" id="4.10.990.10">
    <property type="match status" value="1"/>
</dbReference>
<dbReference type="HAMAP" id="MF_01341">
    <property type="entry name" value="Ribosomal_uL15"/>
    <property type="match status" value="1"/>
</dbReference>
<dbReference type="InterPro" id="IPR027386">
    <property type="entry name" value="Rbsml_uL15_N"/>
</dbReference>
<dbReference type="InterPro" id="IPR030878">
    <property type="entry name" value="Ribosomal_uL15"/>
</dbReference>
<dbReference type="InterPro" id="IPR021131">
    <property type="entry name" value="Ribosomal_uL15/eL18"/>
</dbReference>
<dbReference type="InterPro" id="IPR036227">
    <property type="entry name" value="Ribosomal_uL15/eL18_sf"/>
</dbReference>
<dbReference type="InterPro" id="IPR001196">
    <property type="entry name" value="Ribosomal_uL15_CS"/>
</dbReference>
<dbReference type="PANTHER" id="PTHR11721">
    <property type="entry name" value="60S RIBOSOMAL PROTEIN L27A"/>
    <property type="match status" value="1"/>
</dbReference>
<dbReference type="PANTHER" id="PTHR11721:SF3">
    <property type="entry name" value="LARGE RIBOSOMAL SUBUNIT PROTEIN UL15"/>
    <property type="match status" value="1"/>
</dbReference>
<dbReference type="Pfam" id="PF00828">
    <property type="entry name" value="Ribosomal_L27A"/>
    <property type="match status" value="1"/>
</dbReference>
<dbReference type="SUPFAM" id="SSF52080">
    <property type="entry name" value="Ribosomal proteins L15p and L18e"/>
    <property type="match status" value="1"/>
</dbReference>
<dbReference type="PROSITE" id="PS00475">
    <property type="entry name" value="RIBOSOMAL_L15"/>
    <property type="match status" value="1"/>
</dbReference>
<proteinExistence type="inferred from homology"/>
<evidence type="ECO:0000255" key="1">
    <source>
        <dbReference type="HAMAP-Rule" id="MF_01341"/>
    </source>
</evidence>
<evidence type="ECO:0000256" key="2">
    <source>
        <dbReference type="SAM" id="MobiDB-lite"/>
    </source>
</evidence>
<evidence type="ECO:0000305" key="3"/>
<keyword id="KW-0687">Ribonucleoprotein</keyword>
<keyword id="KW-0689">Ribosomal protein</keyword>
<keyword id="KW-0694">RNA-binding</keyword>
<keyword id="KW-0699">rRNA-binding</keyword>
<protein>
    <recommendedName>
        <fullName evidence="1">Large ribosomal subunit protein uL15</fullName>
    </recommendedName>
    <alternativeName>
        <fullName evidence="3">50S ribosomal protein L15</fullName>
    </alternativeName>
</protein>
<sequence>MDTKKFRGSRTCGGGTHKNRRGAGNRGGRGKAGACKHHFVRAMFRGYSYGKHGFNLPAEISRDVSIVNVGELDELAPYLVEEGLAEIKDDAYHINLENLGIEKVLGSGRVMKNLVVTSEGFSASAREKIEAAGGSCIDAE</sequence>
<gene>
    <name evidence="1" type="primary">rpl15</name>
    <name type="ordered locus">Mbar_A0088</name>
</gene>
<organism>
    <name type="scientific">Methanosarcina barkeri (strain Fusaro / DSM 804)</name>
    <dbReference type="NCBI Taxonomy" id="269797"/>
    <lineage>
        <taxon>Archaea</taxon>
        <taxon>Methanobacteriati</taxon>
        <taxon>Methanobacteriota</taxon>
        <taxon>Stenosarchaea group</taxon>
        <taxon>Methanomicrobia</taxon>
        <taxon>Methanosarcinales</taxon>
        <taxon>Methanosarcinaceae</taxon>
        <taxon>Methanosarcina</taxon>
    </lineage>
</organism>
<name>RL15_METBF</name>
<feature type="chain" id="PRO_0000251595" description="Large ribosomal subunit protein uL15">
    <location>
        <begin position="1"/>
        <end position="140"/>
    </location>
</feature>
<feature type="region of interest" description="Disordered" evidence="2">
    <location>
        <begin position="1"/>
        <end position="31"/>
    </location>
</feature>
<accession>Q46GB7</accession>
<comment type="function">
    <text evidence="1">Binds to the 23S rRNA.</text>
</comment>
<comment type="subunit">
    <text evidence="1">Part of the 50S ribosomal subunit.</text>
</comment>
<comment type="similarity">
    <text evidence="1">Belongs to the universal ribosomal protein uL15 family.</text>
</comment>